<gene>
    <name type="primary">CRIP9</name>
</gene>
<organism>
    <name type="scientific">Zea mays</name>
    <name type="common">Maize</name>
    <dbReference type="NCBI Taxonomy" id="4577"/>
    <lineage>
        <taxon>Eukaryota</taxon>
        <taxon>Viridiplantae</taxon>
        <taxon>Streptophyta</taxon>
        <taxon>Embryophyta</taxon>
        <taxon>Tracheophyta</taxon>
        <taxon>Spermatophyta</taxon>
        <taxon>Magnoliopsida</taxon>
        <taxon>Liliopsida</taxon>
        <taxon>Poales</taxon>
        <taxon>Poaceae</taxon>
        <taxon>PACMAD clade</taxon>
        <taxon>Panicoideae</taxon>
        <taxon>Andropogonodae</taxon>
        <taxon>Andropogoneae</taxon>
        <taxon>Tripsacinae</taxon>
        <taxon>Zea</taxon>
    </lineage>
</organism>
<protein>
    <recommendedName>
        <fullName>Ribosome-inactivating protein 9</fullName>
        <ecNumber>3.2.2.22</ecNumber>
    </recommendedName>
    <alternativeName>
        <fullName>B-32 protein</fullName>
    </alternativeName>
    <alternativeName>
        <fullName>rRNA N-glycosidase</fullName>
    </alternativeName>
</protein>
<accession>P25892</accession>
<keyword id="KW-0963">Cytoplasm</keyword>
<keyword id="KW-0903">Direct protein sequencing</keyword>
<keyword id="KW-0378">Hydrolase</keyword>
<keyword id="KW-0611">Plant defense</keyword>
<keyword id="KW-0652">Protein synthesis inhibitor</keyword>
<keyword id="KW-1185">Reference proteome</keyword>
<keyword id="KW-0800">Toxin</keyword>
<proteinExistence type="evidence at protein level"/>
<dbReference type="EC" id="3.2.2.22"/>
<dbReference type="EMBL" id="M83927">
    <property type="protein sequence ID" value="AAA33454.1"/>
    <property type="molecule type" value="mRNA"/>
</dbReference>
<dbReference type="SMR" id="P25892"/>
<dbReference type="FunCoup" id="P25892">
    <property type="interactions" value="12"/>
</dbReference>
<dbReference type="STRING" id="4577.P25892"/>
<dbReference type="MaizeGDB" id="30000"/>
<dbReference type="InParanoid" id="P25892"/>
<dbReference type="Proteomes" id="UP000007305">
    <property type="component" value="Unplaced"/>
</dbReference>
<dbReference type="ExpressionAtlas" id="P25892">
    <property type="expression patterns" value="baseline and differential"/>
</dbReference>
<dbReference type="GO" id="GO:0005737">
    <property type="term" value="C:cytoplasm"/>
    <property type="evidence" value="ECO:0007669"/>
    <property type="project" value="UniProtKB-SubCell"/>
</dbReference>
<dbReference type="GO" id="GO:0030598">
    <property type="term" value="F:rRNA N-glycosylase activity"/>
    <property type="evidence" value="ECO:0007669"/>
    <property type="project" value="UniProtKB-EC"/>
</dbReference>
<dbReference type="GO" id="GO:0090729">
    <property type="term" value="F:toxin activity"/>
    <property type="evidence" value="ECO:0007669"/>
    <property type="project" value="UniProtKB-KW"/>
</dbReference>
<dbReference type="GO" id="GO:0006952">
    <property type="term" value="P:defense response"/>
    <property type="evidence" value="ECO:0007669"/>
    <property type="project" value="UniProtKB-KW"/>
</dbReference>
<dbReference type="GO" id="GO:0017148">
    <property type="term" value="P:negative regulation of translation"/>
    <property type="evidence" value="ECO:0007669"/>
    <property type="project" value="UniProtKB-KW"/>
</dbReference>
<dbReference type="Gene3D" id="3.40.420.10">
    <property type="entry name" value="Ricin (A subunit), domain 1"/>
    <property type="match status" value="1"/>
</dbReference>
<dbReference type="Gene3D" id="4.10.470.10">
    <property type="entry name" value="Ricin (A Subunit), domain 2"/>
    <property type="match status" value="1"/>
</dbReference>
<dbReference type="InterPro" id="IPR036041">
    <property type="entry name" value="Ribosome-inact_prot_sf"/>
</dbReference>
<dbReference type="InterPro" id="IPR017989">
    <property type="entry name" value="Ribosome_inactivat_1/2"/>
</dbReference>
<dbReference type="InterPro" id="IPR001574">
    <property type="entry name" value="Ribosome_inactivat_prot"/>
</dbReference>
<dbReference type="InterPro" id="IPR017988">
    <property type="entry name" value="Ribosome_inactivat_prot_CS"/>
</dbReference>
<dbReference type="InterPro" id="IPR016138">
    <property type="entry name" value="Ribosome_inactivat_prot_sub1"/>
</dbReference>
<dbReference type="InterPro" id="IPR016139">
    <property type="entry name" value="Ribosome_inactivat_prot_sub2"/>
</dbReference>
<dbReference type="PANTHER" id="PTHR33453">
    <property type="match status" value="1"/>
</dbReference>
<dbReference type="PANTHER" id="PTHR33453:SF9">
    <property type="entry name" value="ALBUMIN B-32"/>
    <property type="match status" value="1"/>
</dbReference>
<dbReference type="Pfam" id="PF00161">
    <property type="entry name" value="RIP"/>
    <property type="match status" value="1"/>
</dbReference>
<dbReference type="PRINTS" id="PR00396">
    <property type="entry name" value="SHIGARICIN"/>
</dbReference>
<dbReference type="SUPFAM" id="SSF56371">
    <property type="entry name" value="Ribosome inactivating proteins (RIP)"/>
    <property type="match status" value="1"/>
</dbReference>
<dbReference type="PROSITE" id="PS00275">
    <property type="entry name" value="SHIGA_RICIN"/>
    <property type="match status" value="1"/>
</dbReference>
<reference key="1">
    <citation type="journal article" date="1992" name="Plant Cell">
        <title>A maize ribosome-inactivating protein is controlled by the transcriptional activator Opaque-2.</title>
        <authorList>
            <person name="Bass H.W."/>
            <person name="Webster C."/>
            <person name="Obrian G.R."/>
            <person name="Roberts J.K.M."/>
            <person name="Boston R.S."/>
        </authorList>
    </citation>
    <scope>NUCLEOTIDE SEQUENCE [MRNA]</scope>
    <scope>PROTEIN SEQUENCE OF 282-301</scope>
    <source>
        <strain>cv. Wisconsin 64A</strain>
    </source>
</reference>
<name>RIP9_MAIZE</name>
<evidence type="ECO:0000250" key="1"/>
<evidence type="ECO:0000305" key="2"/>
<feature type="chain" id="PRO_0000221405" description="Ribosome-inactivating protein 9">
    <location>
        <begin position="1"/>
        <end position="304"/>
    </location>
</feature>
<feature type="active site" evidence="1">
    <location>
        <position position="208"/>
    </location>
</feature>
<comment type="function">
    <text>Possesses features of some constitutive defense agent. The coordinate Opaque-2-controlled synthesis of this protein and the major seed storage proteins (zeins) may provide the germinating seedling with both nutritional benefits and protection against pathogen invasion of the surrounding endosperm.</text>
</comment>
<comment type="catalytic activity">
    <reaction>
        <text>Endohydrolysis of the N-glycosidic bond at one specific adenosine on the 28S rRNA.</text>
        <dbReference type="EC" id="3.2.2.22"/>
    </reaction>
</comment>
<comment type="subunit">
    <text>Monomer.</text>
</comment>
<comment type="subcellular location">
    <subcellularLocation>
        <location>Cytoplasm</location>
    </subcellularLocation>
</comment>
<comment type="tissue specificity">
    <text>Accumulates to high levels in seeds.</text>
</comment>
<comment type="similarity">
    <text evidence="2">Belongs to the ribosome-inactivating protein family. Type 1 RIP subfamily.</text>
</comment>
<sequence>MAETNPELSDLMAQTNKKIVPKFTEIFPVEDVNYPYSAFIASVRKDVIKHCTDHKGIFQPVLPPEKKVPELWFYTELKTRTSSITLAIRMDNLYLVGFRTPGGVWWEFGKAGDTHLLGDNPRWLGFGGRYQDLIGNKGLETVTMGRAEMTRAVNDLAKKKKMATLEEEEVQMQMQMPEAAELAAAAAAADPQADTKSKLVKLVVMVCEGLRFNTVSRTVDAGFNSQHGVTLTVTQGKQVQKWDRISKAAFEWADHPTAVIPDMQKLGIKDKNEAARIVALVKNQTTAAAAAATAASADNDDDEA</sequence>